<accession>Q8G257</accession>
<accession>G0K724</accession>
<reference key="1">
    <citation type="journal article" date="2002" name="Proc. Natl. Acad. Sci. U.S.A.">
        <title>The Brucella suis genome reveals fundamental similarities between animal and plant pathogens and symbionts.</title>
        <authorList>
            <person name="Paulsen I.T."/>
            <person name="Seshadri R."/>
            <person name="Nelson K.E."/>
            <person name="Eisen J.A."/>
            <person name="Heidelberg J.F."/>
            <person name="Read T.D."/>
            <person name="Dodson R.J."/>
            <person name="Umayam L.A."/>
            <person name="Brinkac L.M."/>
            <person name="Beanan M.J."/>
            <person name="Daugherty S.C."/>
            <person name="DeBoy R.T."/>
            <person name="Durkin A.S."/>
            <person name="Kolonay J.F."/>
            <person name="Madupu R."/>
            <person name="Nelson W.C."/>
            <person name="Ayodeji B."/>
            <person name="Kraul M."/>
            <person name="Shetty J."/>
            <person name="Malek J.A."/>
            <person name="Van Aken S.E."/>
            <person name="Riedmuller S."/>
            <person name="Tettelin H."/>
            <person name="Gill S.R."/>
            <person name="White O."/>
            <person name="Salzberg S.L."/>
            <person name="Hoover D.L."/>
            <person name="Lindler L.E."/>
            <person name="Halling S.M."/>
            <person name="Boyle S.M."/>
            <person name="Fraser C.M."/>
        </authorList>
    </citation>
    <scope>NUCLEOTIDE SEQUENCE [LARGE SCALE GENOMIC DNA]</scope>
    <source>
        <strain>1330</strain>
    </source>
</reference>
<reference key="2">
    <citation type="journal article" date="2011" name="J. Bacteriol.">
        <title>Revised genome sequence of Brucella suis 1330.</title>
        <authorList>
            <person name="Tae H."/>
            <person name="Shallom S."/>
            <person name="Settlage R."/>
            <person name="Preston D."/>
            <person name="Adams L.G."/>
            <person name="Garner H.R."/>
        </authorList>
    </citation>
    <scope>NUCLEOTIDE SEQUENCE [LARGE SCALE GENOMIC DNA]</scope>
    <source>
        <strain>1330</strain>
    </source>
</reference>
<organism>
    <name type="scientific">Brucella suis biovar 1 (strain 1330)</name>
    <dbReference type="NCBI Taxonomy" id="204722"/>
    <lineage>
        <taxon>Bacteria</taxon>
        <taxon>Pseudomonadati</taxon>
        <taxon>Pseudomonadota</taxon>
        <taxon>Alphaproteobacteria</taxon>
        <taxon>Hyphomicrobiales</taxon>
        <taxon>Brucellaceae</taxon>
        <taxon>Brucella/Ochrobactrum group</taxon>
        <taxon>Brucella</taxon>
    </lineage>
</organism>
<gene>
    <name evidence="1" type="primary">ispH</name>
    <name type="synonym">lytB</name>
    <name type="ordered locus">BR0475</name>
    <name type="ordered locus">BS1330_I0476</name>
</gene>
<dbReference type="EC" id="1.17.7.4" evidence="1"/>
<dbReference type="EMBL" id="AE014291">
    <property type="protein sequence ID" value="AAN29418.1"/>
    <property type="status" value="ALT_INIT"/>
    <property type="molecule type" value="Genomic_DNA"/>
</dbReference>
<dbReference type="EMBL" id="CP002997">
    <property type="protein sequence ID" value="AEM17831.1"/>
    <property type="status" value="ALT_INIT"/>
    <property type="molecule type" value="Genomic_DNA"/>
</dbReference>
<dbReference type="RefSeq" id="WP_006189939.1">
    <property type="nucleotide sequence ID" value="NZ_KN046804.1"/>
</dbReference>
<dbReference type="SMR" id="Q8G257"/>
<dbReference type="GeneID" id="45051585"/>
<dbReference type="KEGG" id="bms:BR0475"/>
<dbReference type="KEGG" id="bsi:BS1330_I0476"/>
<dbReference type="PATRIC" id="fig|204722.21.peg.1434"/>
<dbReference type="HOGENOM" id="CLU_027486_1_0_5"/>
<dbReference type="PhylomeDB" id="Q8G257"/>
<dbReference type="UniPathway" id="UPA00056">
    <property type="reaction ID" value="UER00097"/>
</dbReference>
<dbReference type="UniPathway" id="UPA00059">
    <property type="reaction ID" value="UER00105"/>
</dbReference>
<dbReference type="Proteomes" id="UP000007104">
    <property type="component" value="Chromosome I"/>
</dbReference>
<dbReference type="GO" id="GO:0051539">
    <property type="term" value="F:4 iron, 4 sulfur cluster binding"/>
    <property type="evidence" value="ECO:0007669"/>
    <property type="project" value="UniProtKB-UniRule"/>
</dbReference>
<dbReference type="GO" id="GO:0051745">
    <property type="term" value="F:4-hydroxy-3-methylbut-2-enyl diphosphate reductase activity"/>
    <property type="evidence" value="ECO:0007669"/>
    <property type="project" value="UniProtKB-UniRule"/>
</dbReference>
<dbReference type="GO" id="GO:0046872">
    <property type="term" value="F:metal ion binding"/>
    <property type="evidence" value="ECO:0007669"/>
    <property type="project" value="UniProtKB-KW"/>
</dbReference>
<dbReference type="GO" id="GO:0050992">
    <property type="term" value="P:dimethylallyl diphosphate biosynthetic process"/>
    <property type="evidence" value="ECO:0007669"/>
    <property type="project" value="UniProtKB-UniRule"/>
</dbReference>
<dbReference type="GO" id="GO:0019288">
    <property type="term" value="P:isopentenyl diphosphate biosynthetic process, methylerythritol 4-phosphate pathway"/>
    <property type="evidence" value="ECO:0007669"/>
    <property type="project" value="UniProtKB-UniRule"/>
</dbReference>
<dbReference type="GO" id="GO:0016114">
    <property type="term" value="P:terpenoid biosynthetic process"/>
    <property type="evidence" value="ECO:0007669"/>
    <property type="project" value="UniProtKB-UniRule"/>
</dbReference>
<dbReference type="CDD" id="cd13944">
    <property type="entry name" value="lytB_ispH"/>
    <property type="match status" value="1"/>
</dbReference>
<dbReference type="Gene3D" id="3.40.50.11270">
    <property type="match status" value="1"/>
</dbReference>
<dbReference type="Gene3D" id="3.40.1010.20">
    <property type="entry name" value="4-hydroxy-3-methylbut-2-enyl diphosphate reductase, catalytic domain"/>
    <property type="match status" value="2"/>
</dbReference>
<dbReference type="HAMAP" id="MF_00191">
    <property type="entry name" value="IspH"/>
    <property type="match status" value="1"/>
</dbReference>
<dbReference type="InterPro" id="IPR003451">
    <property type="entry name" value="LytB/IspH"/>
</dbReference>
<dbReference type="NCBIfam" id="TIGR00216">
    <property type="entry name" value="ispH_lytB"/>
    <property type="match status" value="1"/>
</dbReference>
<dbReference type="NCBIfam" id="NF002190">
    <property type="entry name" value="PRK01045.1-4"/>
    <property type="match status" value="1"/>
</dbReference>
<dbReference type="PANTHER" id="PTHR30426">
    <property type="entry name" value="4-HYDROXY-3-METHYLBUT-2-ENYL DIPHOSPHATE REDUCTASE"/>
    <property type="match status" value="1"/>
</dbReference>
<dbReference type="PANTHER" id="PTHR30426:SF0">
    <property type="entry name" value="4-HYDROXY-3-METHYLBUT-2-ENYL DIPHOSPHATE REDUCTASE"/>
    <property type="match status" value="1"/>
</dbReference>
<dbReference type="Pfam" id="PF02401">
    <property type="entry name" value="LYTB"/>
    <property type="match status" value="1"/>
</dbReference>
<keyword id="KW-0004">4Fe-4S</keyword>
<keyword id="KW-0408">Iron</keyword>
<keyword id="KW-0411">Iron-sulfur</keyword>
<keyword id="KW-0414">Isoprene biosynthesis</keyword>
<keyword id="KW-0479">Metal-binding</keyword>
<keyword id="KW-0560">Oxidoreductase</keyword>
<name>ISPH_BRUSU</name>
<sequence>MTQQRPPLEIRLCGPRGFCAGVDRAIQIVVLALKKYGAPVYVRHEIVHNRYVVEGLQARGAIFVEELDEIPAAHRNQPVVFSAHGVPKSVPADAEAKNLFYLDATCPLVSKVHKQAMRHQRLGRHVILIGHSGHPEVIGTMGQLPDGAVTLIETVEDAHTCHFDDEDNLGFVTQTTLSVDDTAGIIKELQARFPNLAAPAAESICYATTNRQDAVRAAAPGCDLFLIVGAPNSSNSKRLVEVAEKAGARMSMLVQRAEDIEWEQIGDISVVGLSAGASAPEIIVDEIIDAFKAHFDVKIELAETTVETENFLVNREIRDVELTVKDMAFVNGEHRVVGISKLMQGK</sequence>
<protein>
    <recommendedName>
        <fullName evidence="1">4-hydroxy-3-methylbut-2-enyl diphosphate reductase</fullName>
        <shortName evidence="1">HMBPP reductase</shortName>
        <ecNumber evidence="1">1.17.7.4</ecNumber>
    </recommendedName>
</protein>
<feature type="chain" id="PRO_0000128788" description="4-hydroxy-3-methylbut-2-enyl diphosphate reductase">
    <location>
        <begin position="1"/>
        <end position="346"/>
    </location>
</feature>
<feature type="active site" description="Proton donor" evidence="1">
    <location>
        <position position="136"/>
    </location>
</feature>
<feature type="binding site" evidence="1">
    <location>
        <position position="19"/>
    </location>
    <ligand>
        <name>[4Fe-4S] cluster</name>
        <dbReference type="ChEBI" id="CHEBI:49883"/>
    </ligand>
</feature>
<feature type="binding site" evidence="1">
    <location>
        <position position="48"/>
    </location>
    <ligand>
        <name>(2E)-4-hydroxy-3-methylbut-2-enyl diphosphate</name>
        <dbReference type="ChEBI" id="CHEBI:128753"/>
    </ligand>
</feature>
<feature type="binding site" evidence="1">
    <location>
        <position position="48"/>
    </location>
    <ligand>
        <name>dimethylallyl diphosphate</name>
        <dbReference type="ChEBI" id="CHEBI:57623"/>
    </ligand>
</feature>
<feature type="binding site" evidence="1">
    <location>
        <position position="48"/>
    </location>
    <ligand>
        <name>isopentenyl diphosphate</name>
        <dbReference type="ChEBI" id="CHEBI:128769"/>
    </ligand>
</feature>
<feature type="binding site" evidence="1">
    <location>
        <position position="84"/>
    </location>
    <ligand>
        <name>(2E)-4-hydroxy-3-methylbut-2-enyl diphosphate</name>
        <dbReference type="ChEBI" id="CHEBI:128753"/>
    </ligand>
</feature>
<feature type="binding site" evidence="1">
    <location>
        <position position="84"/>
    </location>
    <ligand>
        <name>dimethylallyl diphosphate</name>
        <dbReference type="ChEBI" id="CHEBI:57623"/>
    </ligand>
</feature>
<feature type="binding site" evidence="1">
    <location>
        <position position="84"/>
    </location>
    <ligand>
        <name>isopentenyl diphosphate</name>
        <dbReference type="ChEBI" id="CHEBI:128769"/>
    </ligand>
</feature>
<feature type="binding site" evidence="1">
    <location>
        <position position="106"/>
    </location>
    <ligand>
        <name>[4Fe-4S] cluster</name>
        <dbReference type="ChEBI" id="CHEBI:49883"/>
    </ligand>
</feature>
<feature type="binding site" evidence="1">
    <location>
        <position position="134"/>
    </location>
    <ligand>
        <name>(2E)-4-hydroxy-3-methylbut-2-enyl diphosphate</name>
        <dbReference type="ChEBI" id="CHEBI:128753"/>
    </ligand>
</feature>
<feature type="binding site" evidence="1">
    <location>
        <position position="134"/>
    </location>
    <ligand>
        <name>dimethylallyl diphosphate</name>
        <dbReference type="ChEBI" id="CHEBI:57623"/>
    </ligand>
</feature>
<feature type="binding site" evidence="1">
    <location>
        <position position="134"/>
    </location>
    <ligand>
        <name>isopentenyl diphosphate</name>
        <dbReference type="ChEBI" id="CHEBI:128769"/>
    </ligand>
</feature>
<feature type="binding site" evidence="1">
    <location>
        <position position="175"/>
    </location>
    <ligand>
        <name>(2E)-4-hydroxy-3-methylbut-2-enyl diphosphate</name>
        <dbReference type="ChEBI" id="CHEBI:128753"/>
    </ligand>
</feature>
<feature type="binding site" evidence="1">
    <location>
        <position position="205"/>
    </location>
    <ligand>
        <name>[4Fe-4S] cluster</name>
        <dbReference type="ChEBI" id="CHEBI:49883"/>
    </ligand>
</feature>
<feature type="binding site" evidence="1">
    <location>
        <position position="233"/>
    </location>
    <ligand>
        <name>(2E)-4-hydroxy-3-methylbut-2-enyl diphosphate</name>
        <dbReference type="ChEBI" id="CHEBI:128753"/>
    </ligand>
</feature>
<feature type="binding site" evidence="1">
    <location>
        <position position="233"/>
    </location>
    <ligand>
        <name>dimethylallyl diphosphate</name>
        <dbReference type="ChEBI" id="CHEBI:57623"/>
    </ligand>
</feature>
<feature type="binding site" evidence="1">
    <location>
        <position position="233"/>
    </location>
    <ligand>
        <name>isopentenyl diphosphate</name>
        <dbReference type="ChEBI" id="CHEBI:128769"/>
    </ligand>
</feature>
<feature type="binding site" evidence="1">
    <location>
        <position position="234"/>
    </location>
    <ligand>
        <name>(2E)-4-hydroxy-3-methylbut-2-enyl diphosphate</name>
        <dbReference type="ChEBI" id="CHEBI:128753"/>
    </ligand>
</feature>
<feature type="binding site" evidence="1">
    <location>
        <position position="234"/>
    </location>
    <ligand>
        <name>dimethylallyl diphosphate</name>
        <dbReference type="ChEBI" id="CHEBI:57623"/>
    </ligand>
</feature>
<feature type="binding site" evidence="1">
    <location>
        <position position="234"/>
    </location>
    <ligand>
        <name>isopentenyl diphosphate</name>
        <dbReference type="ChEBI" id="CHEBI:128769"/>
    </ligand>
</feature>
<feature type="binding site" evidence="1">
    <location>
        <position position="235"/>
    </location>
    <ligand>
        <name>(2E)-4-hydroxy-3-methylbut-2-enyl diphosphate</name>
        <dbReference type="ChEBI" id="CHEBI:128753"/>
    </ligand>
</feature>
<feature type="binding site" evidence="1">
    <location>
        <position position="235"/>
    </location>
    <ligand>
        <name>dimethylallyl diphosphate</name>
        <dbReference type="ChEBI" id="CHEBI:57623"/>
    </ligand>
</feature>
<feature type="binding site" evidence="1">
    <location>
        <position position="235"/>
    </location>
    <ligand>
        <name>isopentenyl diphosphate</name>
        <dbReference type="ChEBI" id="CHEBI:128769"/>
    </ligand>
</feature>
<feature type="binding site" evidence="1">
    <location>
        <position position="278"/>
    </location>
    <ligand>
        <name>(2E)-4-hydroxy-3-methylbut-2-enyl diphosphate</name>
        <dbReference type="ChEBI" id="CHEBI:128753"/>
    </ligand>
</feature>
<feature type="binding site" evidence="1">
    <location>
        <position position="278"/>
    </location>
    <ligand>
        <name>dimethylallyl diphosphate</name>
        <dbReference type="ChEBI" id="CHEBI:57623"/>
    </ligand>
</feature>
<feature type="binding site" evidence="1">
    <location>
        <position position="278"/>
    </location>
    <ligand>
        <name>isopentenyl diphosphate</name>
        <dbReference type="ChEBI" id="CHEBI:128769"/>
    </ligand>
</feature>
<evidence type="ECO:0000255" key="1">
    <source>
        <dbReference type="HAMAP-Rule" id="MF_00191"/>
    </source>
</evidence>
<evidence type="ECO:0000305" key="2"/>
<proteinExistence type="inferred from homology"/>
<comment type="function">
    <text evidence="1">Catalyzes the conversion of 1-hydroxy-2-methyl-2-(E)-butenyl 4-diphosphate (HMBPP) into a mixture of isopentenyl diphosphate (IPP) and dimethylallyl diphosphate (DMAPP). Acts in the terminal step of the DOXP/MEP pathway for isoprenoid precursor biosynthesis.</text>
</comment>
<comment type="catalytic activity">
    <reaction evidence="1">
        <text>isopentenyl diphosphate + 2 oxidized [2Fe-2S]-[ferredoxin] + H2O = (2E)-4-hydroxy-3-methylbut-2-enyl diphosphate + 2 reduced [2Fe-2S]-[ferredoxin] + 2 H(+)</text>
        <dbReference type="Rhea" id="RHEA:24488"/>
        <dbReference type="Rhea" id="RHEA-COMP:10000"/>
        <dbReference type="Rhea" id="RHEA-COMP:10001"/>
        <dbReference type="ChEBI" id="CHEBI:15377"/>
        <dbReference type="ChEBI" id="CHEBI:15378"/>
        <dbReference type="ChEBI" id="CHEBI:33737"/>
        <dbReference type="ChEBI" id="CHEBI:33738"/>
        <dbReference type="ChEBI" id="CHEBI:128753"/>
        <dbReference type="ChEBI" id="CHEBI:128769"/>
        <dbReference type="EC" id="1.17.7.4"/>
    </reaction>
</comment>
<comment type="catalytic activity">
    <reaction evidence="1">
        <text>dimethylallyl diphosphate + 2 oxidized [2Fe-2S]-[ferredoxin] + H2O = (2E)-4-hydroxy-3-methylbut-2-enyl diphosphate + 2 reduced [2Fe-2S]-[ferredoxin] + 2 H(+)</text>
        <dbReference type="Rhea" id="RHEA:24825"/>
        <dbReference type="Rhea" id="RHEA-COMP:10000"/>
        <dbReference type="Rhea" id="RHEA-COMP:10001"/>
        <dbReference type="ChEBI" id="CHEBI:15377"/>
        <dbReference type="ChEBI" id="CHEBI:15378"/>
        <dbReference type="ChEBI" id="CHEBI:33737"/>
        <dbReference type="ChEBI" id="CHEBI:33738"/>
        <dbReference type="ChEBI" id="CHEBI:57623"/>
        <dbReference type="ChEBI" id="CHEBI:128753"/>
        <dbReference type="EC" id="1.17.7.4"/>
    </reaction>
</comment>
<comment type="cofactor">
    <cofactor evidence="1">
        <name>[4Fe-4S] cluster</name>
        <dbReference type="ChEBI" id="CHEBI:49883"/>
    </cofactor>
    <text evidence="1">Binds 1 [4Fe-4S] cluster per subunit.</text>
</comment>
<comment type="pathway">
    <text evidence="1">Isoprenoid biosynthesis; dimethylallyl diphosphate biosynthesis; dimethylallyl diphosphate from (2E)-4-hydroxy-3-methylbutenyl diphosphate: step 1/1.</text>
</comment>
<comment type="pathway">
    <text evidence="1">Isoprenoid biosynthesis; isopentenyl diphosphate biosynthesis via DXP pathway; isopentenyl diphosphate from 1-deoxy-D-xylulose 5-phosphate: step 6/6.</text>
</comment>
<comment type="similarity">
    <text evidence="1">Belongs to the IspH family.</text>
</comment>
<comment type="sequence caution" evidence="2">
    <conflict type="erroneous initiation">
        <sequence resource="EMBL-CDS" id="AAN29418"/>
    </conflict>
</comment>
<comment type="sequence caution" evidence="2">
    <conflict type="erroneous initiation">
        <sequence resource="EMBL-CDS" id="AEM17831"/>
    </conflict>
    <text>Extended N-terminus.</text>
</comment>